<feature type="chain" id="PRO_1000010420" description="Heat-inducible transcription repressor HrcA">
    <location>
        <begin position="1"/>
        <end position="356"/>
    </location>
</feature>
<protein>
    <recommendedName>
        <fullName evidence="1">Heat-inducible transcription repressor HrcA</fullName>
    </recommendedName>
</protein>
<name>HRCA_CHESB</name>
<sequence length="356" mass="38969">MTKPVADQSLQSLDARSRDIFRLIVESYLQRGEPVGSRNLSRLLPTQLSPATIRNVMSDLEHLGLIYAPHVSAGRLPTQQGLRFFVDAFMEVGDLSEEERRVIEAQIKASGRGQSLDHMLTEASQMLSGLSRGAGLVLAAKTEAPLKHIEFIQLEPRKALAILVSQNGDVENRVIELPAGVTASQLVEASNFLNAHIRGRTLAEAKSEMARLKEETREALDSLSQSLVEQGLAIWAGAESDTPARIIIRGRANLLENVTAQADLELLRHLFDDLETKEALIQLLGLAEEGPGVRIFIGSENKLFSLSGSSLIVAPYRDQDSRVIGALGIIGPTRLNYARIVPMVDYTAQLVGRLLR</sequence>
<reference key="1">
    <citation type="submission" date="2006-06" db="EMBL/GenBank/DDBJ databases">
        <title>Complete sequence of chromosome of Mesorhizobium sp. BNC1.</title>
        <authorList>
            <consortium name="US DOE Joint Genome Institute"/>
            <person name="Copeland A."/>
            <person name="Lucas S."/>
            <person name="Lapidus A."/>
            <person name="Barry K."/>
            <person name="Detter J.C."/>
            <person name="Glavina del Rio T."/>
            <person name="Hammon N."/>
            <person name="Israni S."/>
            <person name="Dalin E."/>
            <person name="Tice H."/>
            <person name="Pitluck S."/>
            <person name="Chertkov O."/>
            <person name="Brettin T."/>
            <person name="Bruce D."/>
            <person name="Han C."/>
            <person name="Tapia R."/>
            <person name="Gilna P."/>
            <person name="Schmutz J."/>
            <person name="Larimer F."/>
            <person name="Land M."/>
            <person name="Hauser L."/>
            <person name="Kyrpides N."/>
            <person name="Mikhailova N."/>
            <person name="Richardson P."/>
        </authorList>
    </citation>
    <scope>NUCLEOTIDE SEQUENCE [LARGE SCALE GENOMIC DNA]</scope>
    <source>
        <strain>BNC1</strain>
    </source>
</reference>
<dbReference type="EMBL" id="CP000390">
    <property type="protein sequence ID" value="ABG65384.1"/>
    <property type="molecule type" value="Genomic_DNA"/>
</dbReference>
<dbReference type="SMR" id="Q11B41"/>
<dbReference type="STRING" id="266779.Meso_4017"/>
<dbReference type="KEGG" id="mes:Meso_4017"/>
<dbReference type="eggNOG" id="COG1420">
    <property type="taxonomic scope" value="Bacteria"/>
</dbReference>
<dbReference type="HOGENOM" id="CLU_050019_0_0_5"/>
<dbReference type="OrthoDB" id="9783139at2"/>
<dbReference type="GO" id="GO:0003677">
    <property type="term" value="F:DNA binding"/>
    <property type="evidence" value="ECO:0007669"/>
    <property type="project" value="InterPro"/>
</dbReference>
<dbReference type="GO" id="GO:0045892">
    <property type="term" value="P:negative regulation of DNA-templated transcription"/>
    <property type="evidence" value="ECO:0007669"/>
    <property type="project" value="UniProtKB-UniRule"/>
</dbReference>
<dbReference type="Gene3D" id="3.30.450.40">
    <property type="match status" value="1"/>
</dbReference>
<dbReference type="Gene3D" id="3.30.390.60">
    <property type="entry name" value="Heat-inducible transcription repressor hrca homolog, domain 3"/>
    <property type="match status" value="1"/>
</dbReference>
<dbReference type="Gene3D" id="1.10.10.10">
    <property type="entry name" value="Winged helix-like DNA-binding domain superfamily/Winged helix DNA-binding domain"/>
    <property type="match status" value="1"/>
</dbReference>
<dbReference type="HAMAP" id="MF_00081">
    <property type="entry name" value="HrcA"/>
    <property type="match status" value="1"/>
</dbReference>
<dbReference type="InterPro" id="IPR029016">
    <property type="entry name" value="GAF-like_dom_sf"/>
</dbReference>
<dbReference type="InterPro" id="IPR002571">
    <property type="entry name" value="HrcA"/>
</dbReference>
<dbReference type="InterPro" id="IPR021153">
    <property type="entry name" value="HrcA_C"/>
</dbReference>
<dbReference type="InterPro" id="IPR036388">
    <property type="entry name" value="WH-like_DNA-bd_sf"/>
</dbReference>
<dbReference type="InterPro" id="IPR036390">
    <property type="entry name" value="WH_DNA-bd_sf"/>
</dbReference>
<dbReference type="InterPro" id="IPR023120">
    <property type="entry name" value="WHTH_transcript_rep_HrcA_IDD"/>
</dbReference>
<dbReference type="NCBIfam" id="TIGR00331">
    <property type="entry name" value="hrcA"/>
    <property type="match status" value="1"/>
</dbReference>
<dbReference type="PANTHER" id="PTHR34824">
    <property type="entry name" value="HEAT-INDUCIBLE TRANSCRIPTION REPRESSOR HRCA"/>
    <property type="match status" value="1"/>
</dbReference>
<dbReference type="PANTHER" id="PTHR34824:SF1">
    <property type="entry name" value="HEAT-INDUCIBLE TRANSCRIPTION REPRESSOR HRCA"/>
    <property type="match status" value="1"/>
</dbReference>
<dbReference type="Pfam" id="PF01628">
    <property type="entry name" value="HrcA"/>
    <property type="match status" value="1"/>
</dbReference>
<dbReference type="PIRSF" id="PIRSF005485">
    <property type="entry name" value="HrcA"/>
    <property type="match status" value="1"/>
</dbReference>
<dbReference type="SUPFAM" id="SSF55781">
    <property type="entry name" value="GAF domain-like"/>
    <property type="match status" value="1"/>
</dbReference>
<dbReference type="SUPFAM" id="SSF46785">
    <property type="entry name" value="Winged helix' DNA-binding domain"/>
    <property type="match status" value="1"/>
</dbReference>
<evidence type="ECO:0000255" key="1">
    <source>
        <dbReference type="HAMAP-Rule" id="MF_00081"/>
    </source>
</evidence>
<keyword id="KW-0678">Repressor</keyword>
<keyword id="KW-0346">Stress response</keyword>
<keyword id="KW-0804">Transcription</keyword>
<keyword id="KW-0805">Transcription regulation</keyword>
<comment type="function">
    <text evidence="1">Negative regulator of class I heat shock genes (grpE-dnaK-dnaJ and groELS operons). Prevents heat-shock induction of these operons.</text>
</comment>
<comment type="similarity">
    <text evidence="1">Belongs to the HrcA family.</text>
</comment>
<gene>
    <name evidence="1" type="primary">hrcA</name>
    <name type="ordered locus">Meso_4017</name>
</gene>
<organism>
    <name type="scientific">Chelativorans sp. (strain BNC1)</name>
    <dbReference type="NCBI Taxonomy" id="266779"/>
    <lineage>
        <taxon>Bacteria</taxon>
        <taxon>Pseudomonadati</taxon>
        <taxon>Pseudomonadota</taxon>
        <taxon>Alphaproteobacteria</taxon>
        <taxon>Hyphomicrobiales</taxon>
        <taxon>Phyllobacteriaceae</taxon>
        <taxon>Chelativorans</taxon>
    </lineage>
</organism>
<proteinExistence type="inferred from homology"/>
<accession>Q11B41</accession>